<dbReference type="EMBL" id="M15120">
    <property type="protein sequence ID" value="AAA45997.1"/>
    <property type="molecule type" value="Genomic_DNA"/>
</dbReference>
<dbReference type="EMBL" id="X17403">
    <property type="protein sequence ID" value="CAA35356.1"/>
    <property type="molecule type" value="Genomic_DNA"/>
</dbReference>
<dbReference type="EMBL" id="BK000394">
    <property type="protein sequence ID" value="DAA00179.1"/>
    <property type="molecule type" value="Genomic_DNA"/>
</dbReference>
<dbReference type="PIR" id="B26793">
    <property type="entry name" value="WMBES1"/>
</dbReference>
<dbReference type="PDB" id="8QDO">
    <property type="method" value="X-ray"/>
    <property type="resolution" value="2.70 A"/>
    <property type="chains" value="A/B=1-559"/>
</dbReference>
<dbReference type="PDBsum" id="8QDO"/>
<dbReference type="SMR" id="P06726"/>
<dbReference type="DIP" id="DIP-61112N"/>
<dbReference type="ELM" id="P06726"/>
<dbReference type="IntAct" id="P06726">
    <property type="interactions" value="1"/>
</dbReference>
<dbReference type="iPTMnet" id="P06726"/>
<dbReference type="Proteomes" id="UP000008991">
    <property type="component" value="Segment"/>
</dbReference>
<dbReference type="Proteomes" id="UP000008992">
    <property type="component" value="Segment"/>
</dbReference>
<dbReference type="GO" id="GO:0044165">
    <property type="term" value="C:host cell endoplasmic reticulum"/>
    <property type="evidence" value="ECO:0007669"/>
    <property type="project" value="UniProtKB-SubCell"/>
</dbReference>
<dbReference type="GO" id="GO:0042025">
    <property type="term" value="C:host cell nucleus"/>
    <property type="evidence" value="ECO:0000314"/>
    <property type="project" value="UniProtKB"/>
</dbReference>
<dbReference type="GO" id="GO:0019033">
    <property type="term" value="C:viral tegument"/>
    <property type="evidence" value="ECO:0007669"/>
    <property type="project" value="UniProtKB-SubCell"/>
</dbReference>
<dbReference type="GO" id="GO:0039695">
    <property type="term" value="P:DNA-templated viral transcription"/>
    <property type="evidence" value="ECO:0000314"/>
    <property type="project" value="UniProtKB"/>
</dbReference>
<dbReference type="GO" id="GO:0039645">
    <property type="term" value="P:symbiont-mediated perturbation of host cell cycle G1/S transition checkpoint"/>
    <property type="evidence" value="ECO:0007669"/>
    <property type="project" value="UniProtKB-KW"/>
</dbReference>
<dbReference type="GO" id="GO:0052170">
    <property type="term" value="P:symbiont-mediated suppression of host innate immune response"/>
    <property type="evidence" value="ECO:0007669"/>
    <property type="project" value="UniProtKB-KW"/>
</dbReference>
<dbReference type="InterPro" id="IPR008649">
    <property type="entry name" value="Herpes_UL82/UL83"/>
</dbReference>
<dbReference type="Pfam" id="PF05784">
    <property type="entry name" value="Herpes_UL82_83"/>
    <property type="match status" value="1"/>
</dbReference>
<gene>
    <name type="primary">UL82</name>
</gene>
<accession>P06726</accession>
<accession>Q7M6K9</accession>
<name>PP71_HCMVA</name>
<organism>
    <name type="scientific">Human cytomegalovirus (strain AD169)</name>
    <name type="common">HHV-5</name>
    <name type="synonym">Human herpesvirus 5</name>
    <dbReference type="NCBI Taxonomy" id="10360"/>
    <lineage>
        <taxon>Viruses</taxon>
        <taxon>Duplodnaviria</taxon>
        <taxon>Heunggongvirae</taxon>
        <taxon>Peploviricota</taxon>
        <taxon>Herviviricetes</taxon>
        <taxon>Herpesvirales</taxon>
        <taxon>Orthoherpesviridae</taxon>
        <taxon>Betaherpesvirinae</taxon>
        <taxon>Cytomegalovirus</taxon>
        <taxon>Cytomegalovirus humanbeta5</taxon>
        <taxon>Human cytomegalovirus</taxon>
    </lineage>
</organism>
<organismHost>
    <name type="scientific">Homo sapiens</name>
    <name type="common">Human</name>
    <dbReference type="NCBI Taxonomy" id="9606"/>
</organismHost>
<evidence type="ECO:0000256" key="1">
    <source>
        <dbReference type="SAM" id="MobiDB-lite"/>
    </source>
</evidence>
<evidence type="ECO:0000269" key="2">
    <source>
    </source>
</evidence>
<evidence type="ECO:0000269" key="3">
    <source>
    </source>
</evidence>
<evidence type="ECO:0000269" key="4">
    <source>
    </source>
</evidence>
<evidence type="ECO:0000269" key="5">
    <source>
    </source>
</evidence>
<evidence type="ECO:0000269" key="6">
    <source>
    </source>
</evidence>
<evidence type="ECO:0000269" key="7">
    <source>
    </source>
</evidence>
<evidence type="ECO:0000269" key="8">
    <source>
    </source>
</evidence>
<evidence type="ECO:0000269" key="9">
    <source>
    </source>
</evidence>
<evidence type="ECO:0000305" key="10"/>
<proteinExistence type="evidence at protein level"/>
<sequence length="559" mass="61949">MSQASSSPGEGPSSEAAAISEAEAASGSFGRLHCQVLRLITNVEGGSLEAGRLRLLDLRTNIEVSRPSVLCCFQENKSPHDTVDLTDLNIKGRCVVGEQDRLLVDLNNFGPRRLTPGSENNTVSVLAFALPLDRVPVSGLHLFQSQRRGGEENRPRMEARAIIRRTAHHWAVRLTVTPNWRRRTDSSLEAGQIFVSQFAFRAGAIPLTLVDALEQLACSDPNTYIHKTETDERGQWIMLFLHHDSPHPPTSVFLHFSVYTHRAEVVARHNPYPHLRRLPDNGFQLLIPKSFTLTRIHPEYIVQIQNAFETNQTHDTIFFPENIPGVSIEAGPLPDRVRITLRVTLTGDQAVHLEHRQPLGRIHFFRRGFWTLTPGKPDKIKRPQVQLRAGLFPRSNVMRGAVSEFLPQSPGLPPTEEEEEEEEEDDEDDLSSTPTPTPLSEAMFAGFEEASGDEDSDTQAGLSPALILTGQRRRSGNNGALTLVIPSWHVFASLDDLVPLTVSVQHAALRPTSYLRSDMDGDVRTAADISSTLRSVPAPRPSPISTASTSSTPRSRPRI</sequence>
<keyword id="KW-0002">3D-structure</keyword>
<keyword id="KW-0010">Activator</keyword>
<keyword id="KW-1078">G1/S host cell cycle checkpoint dysregulation by virus</keyword>
<keyword id="KW-1038">Host endoplasmic reticulum</keyword>
<keyword id="KW-1048">Host nucleus</keyword>
<keyword id="KW-0945">Host-virus interaction</keyword>
<keyword id="KW-1090">Inhibition of host innate immune response by virus</keyword>
<keyword id="KW-1121">Modulation of host cell cycle by virus</keyword>
<keyword id="KW-0597">Phosphoprotein</keyword>
<keyword id="KW-1185">Reference proteome</keyword>
<keyword id="KW-0702">S-nitrosylation</keyword>
<keyword id="KW-0899">Viral immunoevasion</keyword>
<keyword id="KW-0946">Virion</keyword>
<keyword id="KW-0920">Virion tegument</keyword>
<feature type="chain" id="PRO_0000116290" description="Protein pp71">
    <location>
        <begin position="1"/>
        <end position="559"/>
    </location>
</feature>
<feature type="region of interest" description="Disordered" evidence="1">
    <location>
        <begin position="404"/>
        <end position="440"/>
    </location>
</feature>
<feature type="region of interest" description="Disordered" evidence="1">
    <location>
        <begin position="530"/>
        <end position="559"/>
    </location>
</feature>
<feature type="compositionally biased region" description="Acidic residues" evidence="1">
    <location>
        <begin position="415"/>
        <end position="430"/>
    </location>
</feature>
<feature type="compositionally biased region" description="Low complexity" evidence="1">
    <location>
        <begin position="431"/>
        <end position="440"/>
    </location>
</feature>
<feature type="compositionally biased region" description="Low complexity" evidence="1">
    <location>
        <begin position="543"/>
        <end position="559"/>
    </location>
</feature>
<feature type="modified residue" description="S-nitrosocysteine; by host" evidence="8">
    <location>
        <position position="218"/>
    </location>
</feature>
<feature type="modified residue" description="Phosphothreonine" evidence="7">
    <location>
        <position position="223"/>
    </location>
</feature>
<feature type="mutagenesis site" description="Increased inhibition of STING1-mediated antiviral response." evidence="8">
    <original>C</original>
    <variation>S</variation>
    <location>
        <position position="218"/>
    </location>
</feature>
<protein>
    <recommendedName>
        <fullName>Protein pp71</fullName>
        <shortName>pp71</shortName>
    </recommendedName>
    <alternativeName>
        <fullName>71 kDa upper matrix phosphoprotein</fullName>
    </alternativeName>
    <alternativeName>
        <fullName>Phosphoprotein UL82</fullName>
        <shortName>ppUL82</shortName>
    </alternativeName>
    <alternativeName>
        <fullName>Tegument protein UL82</fullName>
    </alternativeName>
</protein>
<reference key="1">
    <citation type="journal article" date="1987" name="J. Virol.">
        <title>Primary structure and transcription of the genes coding for the two virion phosphoproteins pp65 and pp71 of human cytomegalovirus.</title>
        <authorList>
            <person name="Rueger B."/>
            <person name="Klages S."/>
            <person name="Walla B."/>
            <person name="Albrecht J.-C."/>
            <person name="Fleckenstein B."/>
            <person name="Tomlinson P."/>
            <person name="Barrell B.G."/>
        </authorList>
    </citation>
    <scope>NUCLEOTIDE SEQUENCE [GENOMIC DNA]</scope>
</reference>
<reference key="2">
    <citation type="journal article" date="1990" name="Curr. Top. Microbiol. Immunol.">
        <title>Analysis of the protein-coding content of the sequence of human cytomegalovirus strain AD169.</title>
        <authorList>
            <person name="Chee M.S."/>
            <person name="Bankier A.T."/>
            <person name="Beck S."/>
            <person name="Bohni R."/>
            <person name="Brown C.M."/>
            <person name="Cerny R."/>
            <person name="Horsnell T."/>
            <person name="Hutchison C.A. III"/>
            <person name="Kouzarides T."/>
            <person name="Martignetti J.A."/>
            <person name="Preddie E."/>
            <person name="Satchwell S.C."/>
            <person name="Tomlinson P."/>
            <person name="Weston K.M."/>
            <person name="Barrell B.G."/>
        </authorList>
    </citation>
    <scope>NUCLEOTIDE SEQUENCE [LARGE SCALE GENOMIC DNA]</scope>
</reference>
<reference key="3">
    <citation type="journal article" date="2003" name="J. Gen. Virol.">
        <title>The human cytomegalovirus genome revisited: comparison with the chimpanzee cytomegalovirus genome.</title>
        <authorList>
            <person name="Davison A.J."/>
            <person name="Dolan A."/>
            <person name="Akter P."/>
            <person name="Addison C."/>
            <person name="Dargan D.J."/>
            <person name="Alcendor D.J."/>
            <person name="McGeoch D.J."/>
            <person name="Hayward G.S."/>
        </authorList>
    </citation>
    <scope>GENOME REANNOTATION</scope>
</reference>
<reference key="4">
    <citation type="journal article" date="2003" name="J. Gen. Virol.">
        <authorList>
            <person name="Davison A.J."/>
            <person name="Dolan A."/>
            <person name="Akter P."/>
            <person name="Addison C."/>
            <person name="Dargan D.J."/>
            <person name="Alcendor D.J."/>
            <person name="McGeoch D.J."/>
            <person name="Hayward G.S."/>
        </authorList>
    </citation>
    <scope>ERRATUM OF PUBMED:12533697</scope>
</reference>
<reference key="5">
    <citation type="journal article" date="1996" name="J. Gen. Virol.">
        <title>Intracellular localization and expression of the human cytomegalovirus matrix phosphoprotein pp71 (ppUL82): evidence for its translocation into the nucleus.</title>
        <authorList>
            <person name="Hensel G.M."/>
            <person name="Meyer H.H."/>
            <person name="Buchmann I."/>
            <person name="Pommerehne D."/>
            <person name="Schmolke S."/>
            <person name="Plachter B."/>
            <person name="Radsak K."/>
            <person name="Kern H.F."/>
        </authorList>
    </citation>
    <scope>SUBCELLULAR LOCATION</scope>
</reference>
<reference key="6">
    <citation type="journal article" date="2003" name="J. Virol.">
        <title>The human cytomegalovirus UL82 gene product (pp71) accelerates progression through the G1 phase of the cell cycle.</title>
        <authorList>
            <person name="Kalejta R.F."/>
            <person name="Shenk T."/>
        </authorList>
    </citation>
    <scope>FUNCTION</scope>
</reference>
<reference key="7">
    <citation type="journal article" date="2003" name="Proc. Natl. Acad. Sci. U.S.A.">
        <title>Proteasome-dependent, ubiquitin-independent degradation of the Rb family of tumor suppressors by the human cytomegalovirus pp71 protein.</title>
        <authorList>
            <person name="Kalejta R.F."/>
            <person name="Shenk T."/>
        </authorList>
    </citation>
    <scope>FUNCTION</scope>
    <scope>INTERACTION WITH HOST RB1</scope>
</reference>
<reference key="8">
    <citation type="journal article" date="2004" name="J. Virol.">
        <title>Human cytomegalovirus tegument proteins ppUL82 (pp71) and ppUL35 interact and cooperatively activate the major immediate-early enhancer.</title>
        <authorList>
            <person name="Schierling K."/>
            <person name="Stamminger T."/>
            <person name="Mertens T."/>
            <person name="Winkler M."/>
        </authorList>
    </citation>
    <scope>INTERACTION WITH UL35</scope>
</reference>
<reference key="9">
    <citation type="journal article" date="2004" name="J. Virol.">
        <title>Identification of proteins in human cytomegalovirus (HCMV) particles: the HCMV proteome.</title>
        <authorList>
            <person name="Varnum S.M."/>
            <person name="Streblow D.N."/>
            <person name="Monroe M.E."/>
            <person name="Smith P."/>
            <person name="Auberry K.J."/>
            <person name="Pasa-Tolic L."/>
            <person name="Wang D."/>
            <person name="Camp D.G. II"/>
            <person name="Rodland K."/>
            <person name="Wiley S."/>
            <person name="Britt W."/>
            <person name="Shenk T."/>
            <person name="Smith R.D."/>
            <person name="Nelson J.A."/>
        </authorList>
    </citation>
    <scope>IDENTIFICATION</scope>
</reference>
<reference key="10">
    <citation type="journal article" date="2004" name="J. Virol.">
        <authorList>
            <person name="Varnum S.M."/>
            <person name="Streblow D.N."/>
            <person name="Monroe M.E."/>
            <person name="Smith P."/>
            <person name="Auberry K.J."/>
            <person name="Pasa-Tolic L."/>
            <person name="Wang D."/>
            <person name="Camp D.G. II"/>
            <person name="Rodland K."/>
            <person name="Wiley S."/>
            <person name="Britt W."/>
            <person name="Shenk T."/>
            <person name="Smith R.D."/>
            <person name="Nelson J.A."/>
        </authorList>
    </citation>
    <scope>ERRATUM OF PUBMED:15452216</scope>
</reference>
<reference key="11">
    <citation type="journal article" date="2008" name="J. Virol.">
        <title>Human cytomegalovirus protein pp71 displaces the chromatin-associated factor ATRX from nuclear domain 10 at early stages of infection.</title>
        <authorList>
            <person name="Lukashchuk V."/>
            <person name="McFarlane S."/>
            <person name="Everett R.D."/>
            <person name="Preston C.M."/>
        </authorList>
    </citation>
    <scope>FUNCTION</scope>
    <scope>INTERACTION WITH HUMAN DAXX</scope>
</reference>
<reference key="12">
    <citation type="journal article" date="2009" name="J. Virol.">
        <title>Human cytomegalovirus protein pp71 induces Daxx SUMOylation.</title>
        <authorList>
            <person name="Hwang J."/>
            <person name="Kalejta R.F."/>
        </authorList>
    </citation>
    <scope>FUNCTION</scope>
    <scope>INTERACTION WITH HOST DAXX</scope>
    <scope>SUBCELLULAR LOCATION</scope>
</reference>
<reference key="13">
    <citation type="journal article" date="2017" name="Cell Host Microbe">
        <title>Human cytomegalovirus tegument Protein UL82 inhibits STING-mediated signaling to evade antiviral immunity.</title>
        <authorList>
            <person name="Fu Y.Z."/>
            <person name="Su S."/>
            <person name="Gao Y.Q."/>
            <person name="Wang P.P."/>
            <person name="Huang Z.F."/>
            <person name="Hu M.M."/>
            <person name="Luo W.W."/>
            <person name="Li S."/>
            <person name="Luo M.H."/>
            <person name="Wang Y.Y."/>
            <person name="Shu H.B."/>
        </authorList>
    </citation>
    <scope>PHOSPHORYLATION AT THR-223</scope>
    <scope>FUNCTION</scope>
    <scope>INTERACTION WITH HOST TMEM173</scope>
    <scope>SUBCELLULAR LOCATION</scope>
</reference>
<reference key="14">
    <citation type="journal article" date="2020" name="J. Virol.">
        <title>Protein S-Nitrosylation of Human Cytomegalovirus pp71 Inhibits Its Ability To Limit STING Antiviral Responses.</title>
        <authorList>
            <person name="Nukui M."/>
            <person name="Roche K.L."/>
            <person name="Jia J."/>
            <person name="Fox P.L."/>
            <person name="Murphy E.A."/>
        </authorList>
    </citation>
    <scope>FUNCTION</scope>
    <scope>S-NITROSYLATION AT CYS-218</scope>
    <scope>INTERACTION WITH HOST STING1</scope>
    <scope>MUTAGENESIS OF CYS-218</scope>
</reference>
<comment type="function">
    <text evidence="2 3 5 6 7 8">Stimulates viral immediate-early (IE) transcription. Plays a role in the inhibition of the host innate repsonse by targeting STING1 and thus the cGAS-STING pathway (PubMed:28132838, PubMed:32581105). Also counteracts host DAXX-mediated repression of viral transcription. Displaces a DAXX-binding protein, ATRX, from nuclear domain 10 sites (ND10) shortly after infection (PubMed:18922870). Increases the basal level of SUMOylated DAXX in infected cells (PubMed:19369322). Stimulates quiescent cells to re-enter the cell cycle, proceed through G1 and enter the S phase (PubMed:12610120). Interacts with hypophosphorylated forms of RB1 and induces their degradation by the proteasome without involving ubiquitin conjugation (PubMed:12626766).</text>
</comment>
<comment type="subunit">
    <text evidence="3 4 5 6 7 8">Interacts with the host protein DAXX; this interaction takes place at ND10 and induces the reversal of DAXX-mediated repression of viral transcription (PubMed:18922870, PubMed:19369322). Interacts with UL35 (PubMed:15308743). Interacts with host TMEM173/STING1; this interaction inhibits the cGAS/STING pathway (PubMed:28132838, PubMed:32581105). Interacts with host RB1; this interaction mediates RB1 proteasomal degradation (PubMed:12626766).</text>
</comment>
<comment type="subcellular location">
    <subcellularLocation>
        <location evidence="10">Virion tegument</location>
    </subcellularLocation>
    <subcellularLocation>
        <location evidence="6 9">Host nucleus</location>
    </subcellularLocation>
    <subcellularLocation>
        <location evidence="7">Host endoplasmic reticulum</location>
    </subcellularLocation>
    <text>Present in the nucleus shortly after infection as well as during the late phase of viral morphogenesis. Detected at nuclear domain 10 (ND10).</text>
</comment>
<comment type="PTM">
    <text evidence="8">S-nitrosylation limits ability to undermine the cGAS/STING antiviral pathway.</text>
</comment>
<comment type="similarity">
    <text evidence="10">Belongs to the herpesviridae pp71 family.</text>
</comment>